<comment type="function">
    <text evidence="4">Myosins are actin-based motor molecules with ATPase activity. Unconventional myosins serve in intracellular movements. Their highly divergent tails are presumed to bind to membranous compartments, which would be moved relative to actin filaments (By similarity).</text>
</comment>
<comment type="subunit">
    <text evidence="2">Interacts (via its IQ motifs) with calm.</text>
</comment>
<comment type="subcellular location">
    <subcellularLocation>
        <location evidence="4">Cytoplasm</location>
    </subcellularLocation>
    <subcellularLocation>
        <location evidence="4">Cytoplasm</location>
        <location evidence="4">Cell cortex</location>
    </subcellularLocation>
    <subcellularLocation>
        <location evidence="4">Cell projection</location>
        <location evidence="4">Ruffle membrane</location>
    </subcellularLocation>
    <subcellularLocation>
        <location evidence="4">Cytoplasmic vesicle</location>
    </subcellularLocation>
    <subcellularLocation>
        <location evidence="3">Cell projection</location>
        <location evidence="3">Stereocilium membrane</location>
    </subcellularLocation>
</comment>
<comment type="similarity">
    <text evidence="8">Belongs to the TRAFAC class myosin-kinesin ATPase superfamily. Myosin family.</text>
</comment>
<comment type="caution">
    <text evidence="8">Represents an unconventional myosin. This protein should not be confused with the conventional myosin-1 (MYH1).</text>
</comment>
<feature type="chain" id="PRO_0000369411" description="Unconventional myosin-Ic">
    <location>
        <begin position="1"/>
        <end position="1026"/>
    </location>
</feature>
<feature type="domain" description="Myosin motor" evidence="6">
    <location>
        <begin position="12"/>
        <end position="695"/>
    </location>
</feature>
<feature type="domain" description="IQ 1" evidence="5">
    <location>
        <begin position="698"/>
        <end position="727"/>
    </location>
</feature>
<feature type="domain" description="IQ 2" evidence="5">
    <location>
        <begin position="721"/>
        <end position="750"/>
    </location>
</feature>
<feature type="domain" description="TH1" evidence="7">
    <location>
        <begin position="849"/>
        <end position="1024"/>
    </location>
</feature>
<feature type="region of interest" description="Actin-binding" evidence="6">
    <location>
        <begin position="572"/>
        <end position="594"/>
    </location>
</feature>
<feature type="binding site" evidence="1">
    <location>
        <position position="53"/>
    </location>
    <ligand>
        <name>ATP</name>
        <dbReference type="ChEBI" id="CHEBI:30616"/>
    </ligand>
</feature>
<feature type="binding site" evidence="1">
    <location>
        <position position="61"/>
    </location>
    <ligand>
        <name>ATP</name>
        <dbReference type="ChEBI" id="CHEBI:30616"/>
    </ligand>
</feature>
<feature type="binding site" evidence="1">
    <location>
        <begin position="104"/>
        <end position="113"/>
    </location>
    <ligand>
        <name>ATP</name>
        <dbReference type="ChEBI" id="CHEBI:30616"/>
    </ligand>
</feature>
<feature type="binding site" evidence="1">
    <location>
        <begin position="157"/>
        <end position="161"/>
    </location>
    <ligand>
        <name>ATP</name>
        <dbReference type="ChEBI" id="CHEBI:30616"/>
    </ligand>
</feature>
<feature type="modified residue" description="N-acetylmethionine" evidence="1">
    <location>
        <position position="1"/>
    </location>
</feature>
<feature type="modified residue" description="N6-methyllysine" evidence="1">
    <location>
        <position position="349"/>
    </location>
</feature>
<reference key="1">
    <citation type="journal article" date="2013" name="Nature">
        <title>The zebrafish reference genome sequence and its relationship to the human genome.</title>
        <authorList>
            <person name="Howe K."/>
            <person name="Clark M.D."/>
            <person name="Torroja C.F."/>
            <person name="Torrance J."/>
            <person name="Berthelot C."/>
            <person name="Muffato M."/>
            <person name="Collins J.E."/>
            <person name="Humphray S."/>
            <person name="McLaren K."/>
            <person name="Matthews L."/>
            <person name="McLaren S."/>
            <person name="Sealy I."/>
            <person name="Caccamo M."/>
            <person name="Churcher C."/>
            <person name="Scott C."/>
            <person name="Barrett J.C."/>
            <person name="Koch R."/>
            <person name="Rauch G.J."/>
            <person name="White S."/>
            <person name="Chow W."/>
            <person name="Kilian B."/>
            <person name="Quintais L.T."/>
            <person name="Guerra-Assuncao J.A."/>
            <person name="Zhou Y."/>
            <person name="Gu Y."/>
            <person name="Yen J."/>
            <person name="Vogel J.H."/>
            <person name="Eyre T."/>
            <person name="Redmond S."/>
            <person name="Banerjee R."/>
            <person name="Chi J."/>
            <person name="Fu B."/>
            <person name="Langley E."/>
            <person name="Maguire S.F."/>
            <person name="Laird G.K."/>
            <person name="Lloyd D."/>
            <person name="Kenyon E."/>
            <person name="Donaldson S."/>
            <person name="Sehra H."/>
            <person name="Almeida-King J."/>
            <person name="Loveland J."/>
            <person name="Trevanion S."/>
            <person name="Jones M."/>
            <person name="Quail M."/>
            <person name="Willey D."/>
            <person name="Hunt A."/>
            <person name="Burton J."/>
            <person name="Sims S."/>
            <person name="McLay K."/>
            <person name="Plumb B."/>
            <person name="Davis J."/>
            <person name="Clee C."/>
            <person name="Oliver K."/>
            <person name="Clark R."/>
            <person name="Riddle C."/>
            <person name="Elliot D."/>
            <person name="Threadgold G."/>
            <person name="Harden G."/>
            <person name="Ware D."/>
            <person name="Begum S."/>
            <person name="Mortimore B."/>
            <person name="Kerry G."/>
            <person name="Heath P."/>
            <person name="Phillimore B."/>
            <person name="Tracey A."/>
            <person name="Corby N."/>
            <person name="Dunn M."/>
            <person name="Johnson C."/>
            <person name="Wood J."/>
            <person name="Clark S."/>
            <person name="Pelan S."/>
            <person name="Griffiths G."/>
            <person name="Smith M."/>
            <person name="Glithero R."/>
            <person name="Howden P."/>
            <person name="Barker N."/>
            <person name="Lloyd C."/>
            <person name="Stevens C."/>
            <person name="Harley J."/>
            <person name="Holt K."/>
            <person name="Panagiotidis G."/>
            <person name="Lovell J."/>
            <person name="Beasley H."/>
            <person name="Henderson C."/>
            <person name="Gordon D."/>
            <person name="Auger K."/>
            <person name="Wright D."/>
            <person name="Collins J."/>
            <person name="Raisen C."/>
            <person name="Dyer L."/>
            <person name="Leung K."/>
            <person name="Robertson L."/>
            <person name="Ambridge K."/>
            <person name="Leongamornlert D."/>
            <person name="McGuire S."/>
            <person name="Gilderthorp R."/>
            <person name="Griffiths C."/>
            <person name="Manthravadi D."/>
            <person name="Nichol S."/>
            <person name="Barker G."/>
            <person name="Whitehead S."/>
            <person name="Kay M."/>
            <person name="Brown J."/>
            <person name="Murnane C."/>
            <person name="Gray E."/>
            <person name="Humphries M."/>
            <person name="Sycamore N."/>
            <person name="Barker D."/>
            <person name="Saunders D."/>
            <person name="Wallis J."/>
            <person name="Babbage A."/>
            <person name="Hammond S."/>
            <person name="Mashreghi-Mohammadi M."/>
            <person name="Barr L."/>
            <person name="Martin S."/>
            <person name="Wray P."/>
            <person name="Ellington A."/>
            <person name="Matthews N."/>
            <person name="Ellwood M."/>
            <person name="Woodmansey R."/>
            <person name="Clark G."/>
            <person name="Cooper J."/>
            <person name="Tromans A."/>
            <person name="Grafham D."/>
            <person name="Skuce C."/>
            <person name="Pandian R."/>
            <person name="Andrews R."/>
            <person name="Harrison E."/>
            <person name="Kimberley A."/>
            <person name="Garnett J."/>
            <person name="Fosker N."/>
            <person name="Hall R."/>
            <person name="Garner P."/>
            <person name="Kelly D."/>
            <person name="Bird C."/>
            <person name="Palmer S."/>
            <person name="Gehring I."/>
            <person name="Berger A."/>
            <person name="Dooley C.M."/>
            <person name="Ersan-Urun Z."/>
            <person name="Eser C."/>
            <person name="Geiger H."/>
            <person name="Geisler M."/>
            <person name="Karotki L."/>
            <person name="Kirn A."/>
            <person name="Konantz J."/>
            <person name="Konantz M."/>
            <person name="Oberlander M."/>
            <person name="Rudolph-Geiger S."/>
            <person name="Teucke M."/>
            <person name="Lanz C."/>
            <person name="Raddatz G."/>
            <person name="Osoegawa K."/>
            <person name="Zhu B."/>
            <person name="Rapp A."/>
            <person name="Widaa S."/>
            <person name="Langford C."/>
            <person name="Yang F."/>
            <person name="Schuster S.C."/>
            <person name="Carter N.P."/>
            <person name="Harrow J."/>
            <person name="Ning Z."/>
            <person name="Herrero J."/>
            <person name="Searle S.M."/>
            <person name="Enright A."/>
            <person name="Geisler R."/>
            <person name="Plasterk R.H."/>
            <person name="Lee C."/>
            <person name="Westerfield M."/>
            <person name="de Jong P.J."/>
            <person name="Zon L.I."/>
            <person name="Postlethwait J.H."/>
            <person name="Nusslein-Volhard C."/>
            <person name="Hubbard T.J."/>
            <person name="Roest Crollius H."/>
            <person name="Rogers J."/>
            <person name="Stemple D.L."/>
        </authorList>
    </citation>
    <scope>NUCLEOTIDE SEQUENCE [LARGE SCALE GENOMIC DNA]</scope>
    <source>
        <strain>Tuebingen</strain>
    </source>
</reference>
<sequence length="1026" mass="118063">MESALSARDRVGVQDFLLLENHNSEAAFIENLRRRYREGLIYTYIGSVLVSVNPYKELEIYSKQNMERHRGVNFYEISPHIFALADNSYRALRTERRDQCILISGESGAGKTEASKKILQYYTHICPTRNNTHTIRERLLQSNPVLEAFGNAKTLRNDNSSRFGKYMDIQFDYKGAPIGGHILNYLLEKSRVAHQNHGERNFHIFYQLLEGGEDLLLKRLGLDKTNPQHYHYLIKGNCPRVSSISDKNGWKVVRNALTIIGFEDEEIQALMEIVASVLHLGNTQFGEDEEGETHITTEAQLQFLSQLLGVDGSVLKAALTHKKIVAKGEEMISPLSLEQALSARDSFAKAIYGRAFTWLVQKLNRSLAFKDEIYYSSKCSSVIGLLDIYGFEVFQHNSFEQFCINYCNEKLQQLFIELTLKSEQEEYEAEGWERVEYFNNKIICDLVEEKHKGIIAILDEECLRRGDASDITFLEKLEDTLGGHAHFITHKMANGKIRKAIGREEFRLVHYAGEVNYNVNGFLDKNNDLLYRHLKEVLCQSTNHIVSQCFHADELMDQRRPETAATQFKLSLAKLMDILMSKEPSYVRCIKPNDGKQPGRFDEVLVRHQVKYLGLMENLRVRRAGFAYRRSYEAFLERYKSLCPDTWPNWHGNLPEGVATLVKHLNYKPEEFKLGRSKIFIRFPRTLFITEDALEAQKQTIAVTLQKSWRGYRERANYHRIRHAVIVIQSWWRGVKGRRKAKHRRQAADTIRNFIKGFILRNEPRCPDNEYFLDHVRFSFLMKVKRNLPKSVLDKSWPKPPPSLTEASEHIHRICIRNLVNDYCRRIQPEWRKQLEQKVVASGIFKGQKDGYSRSVPKLFVATRLEAEEINLKVLQTLGSDNKVKYGIAVTKYDRHGFRPRVRQLLLTTSSAVLVQEAKIKQRIDYGALLGISVSSLSDGFFVLHIPTADSKQKGDLVLQCDHVIEAVTKLAIMADKIHNVNISQDSIRFAIARGKEGVIDFTSGSDLRVVKSKNGHLSVTTPRIS</sequence>
<evidence type="ECO:0000250" key="1"/>
<evidence type="ECO:0000250" key="2">
    <source>
        <dbReference type="UniProtKB" id="O00159"/>
    </source>
</evidence>
<evidence type="ECO:0000250" key="3">
    <source>
        <dbReference type="UniProtKB" id="Q92002"/>
    </source>
</evidence>
<evidence type="ECO:0000250" key="4">
    <source>
        <dbReference type="UniProtKB" id="Q9WTI7"/>
    </source>
</evidence>
<evidence type="ECO:0000255" key="5">
    <source>
        <dbReference type="PROSITE-ProRule" id="PRU00116"/>
    </source>
</evidence>
<evidence type="ECO:0000255" key="6">
    <source>
        <dbReference type="PROSITE-ProRule" id="PRU00782"/>
    </source>
</evidence>
<evidence type="ECO:0000255" key="7">
    <source>
        <dbReference type="PROSITE-ProRule" id="PRU01093"/>
    </source>
</evidence>
<evidence type="ECO:0000305" key="8"/>
<protein>
    <recommendedName>
        <fullName>Unconventional myosin-Ic</fullName>
    </recommendedName>
    <alternativeName>
        <fullName>Myosin I beta</fullName>
        <shortName>MMI-beta</shortName>
        <shortName>MMIb</shortName>
    </alternativeName>
</protein>
<keyword id="KW-0007">Acetylation</keyword>
<keyword id="KW-0009">Actin-binding</keyword>
<keyword id="KW-0067">ATP-binding</keyword>
<keyword id="KW-1003">Cell membrane</keyword>
<keyword id="KW-0966">Cell projection</keyword>
<keyword id="KW-0963">Cytoplasm</keyword>
<keyword id="KW-0968">Cytoplasmic vesicle</keyword>
<keyword id="KW-0472">Membrane</keyword>
<keyword id="KW-0488">Methylation</keyword>
<keyword id="KW-0505">Motor protein</keyword>
<keyword id="KW-0518">Myosin</keyword>
<keyword id="KW-0547">Nucleotide-binding</keyword>
<keyword id="KW-1185">Reference proteome</keyword>
<keyword id="KW-0677">Repeat</keyword>
<name>MYO1C_DANRE</name>
<proteinExistence type="inferred from homology"/>
<accession>A5PF48</accession>
<gene>
    <name type="primary">myo1c</name>
    <name type="ORF">si:ch211-69i14.4</name>
</gene>
<organism>
    <name type="scientific">Danio rerio</name>
    <name type="common">Zebrafish</name>
    <name type="synonym">Brachydanio rerio</name>
    <dbReference type="NCBI Taxonomy" id="7955"/>
    <lineage>
        <taxon>Eukaryota</taxon>
        <taxon>Metazoa</taxon>
        <taxon>Chordata</taxon>
        <taxon>Craniata</taxon>
        <taxon>Vertebrata</taxon>
        <taxon>Euteleostomi</taxon>
        <taxon>Actinopterygii</taxon>
        <taxon>Neopterygii</taxon>
        <taxon>Teleostei</taxon>
        <taxon>Ostariophysi</taxon>
        <taxon>Cypriniformes</taxon>
        <taxon>Danionidae</taxon>
        <taxon>Danioninae</taxon>
        <taxon>Danio</taxon>
    </lineage>
</organism>
<dbReference type="EMBL" id="AL935065">
    <property type="protein sequence ID" value="CAN88202.1"/>
    <property type="molecule type" value="Genomic_DNA"/>
</dbReference>
<dbReference type="RefSeq" id="NP_001093501.1">
    <property type="nucleotide sequence ID" value="NM_001100031.1"/>
</dbReference>
<dbReference type="SMR" id="A5PF48"/>
<dbReference type="FunCoup" id="A5PF48">
    <property type="interactions" value="9"/>
</dbReference>
<dbReference type="STRING" id="7955.ENSDARP00000053510"/>
<dbReference type="PaxDb" id="7955-ENSDARP00000053510"/>
<dbReference type="PeptideAtlas" id="A5PF48"/>
<dbReference type="Ensembl" id="ENSDART00000189812">
    <property type="protein sequence ID" value="ENSDARP00000146110"/>
    <property type="gene ID" value="ENSDARG00000020924"/>
</dbReference>
<dbReference type="AGR" id="ZFIN:ZDB-GENE-070705-190"/>
<dbReference type="ZFIN" id="ZDB-GENE-070705-190">
    <property type="gene designation" value="myo1ca"/>
</dbReference>
<dbReference type="eggNOG" id="KOG0164">
    <property type="taxonomic scope" value="Eukaryota"/>
</dbReference>
<dbReference type="HOGENOM" id="CLU_000192_7_7_1"/>
<dbReference type="InParanoid" id="A5PF48"/>
<dbReference type="OrthoDB" id="6108017at2759"/>
<dbReference type="PhylomeDB" id="A5PF48"/>
<dbReference type="TreeFam" id="TF312960"/>
<dbReference type="PRO" id="PR:A5PF48"/>
<dbReference type="Proteomes" id="UP000000437">
    <property type="component" value="Chromosome 5"/>
</dbReference>
<dbReference type="Bgee" id="ENSDARG00000020924">
    <property type="expression patterns" value="Expressed in swim bladder and 24 other cell types or tissues"/>
</dbReference>
<dbReference type="ExpressionAtlas" id="A5PF48">
    <property type="expression patterns" value="baseline"/>
</dbReference>
<dbReference type="GO" id="GO:0015629">
    <property type="term" value="C:actin cytoskeleton"/>
    <property type="evidence" value="ECO:0000318"/>
    <property type="project" value="GO_Central"/>
</dbReference>
<dbReference type="GO" id="GO:0005938">
    <property type="term" value="C:cell cortex"/>
    <property type="evidence" value="ECO:0007669"/>
    <property type="project" value="UniProtKB-SubCell"/>
</dbReference>
<dbReference type="GO" id="GO:0005737">
    <property type="term" value="C:cytoplasm"/>
    <property type="evidence" value="ECO:0000318"/>
    <property type="project" value="GO_Central"/>
</dbReference>
<dbReference type="GO" id="GO:0031410">
    <property type="term" value="C:cytoplasmic vesicle"/>
    <property type="evidence" value="ECO:0007669"/>
    <property type="project" value="UniProtKB-KW"/>
</dbReference>
<dbReference type="GO" id="GO:0005902">
    <property type="term" value="C:microvillus"/>
    <property type="evidence" value="ECO:0000318"/>
    <property type="project" value="GO_Central"/>
</dbReference>
<dbReference type="GO" id="GO:0016459">
    <property type="term" value="C:myosin complex"/>
    <property type="evidence" value="ECO:0007669"/>
    <property type="project" value="UniProtKB-KW"/>
</dbReference>
<dbReference type="GO" id="GO:0005886">
    <property type="term" value="C:plasma membrane"/>
    <property type="evidence" value="ECO:0000318"/>
    <property type="project" value="GO_Central"/>
</dbReference>
<dbReference type="GO" id="GO:0032587">
    <property type="term" value="C:ruffle membrane"/>
    <property type="evidence" value="ECO:0007669"/>
    <property type="project" value="UniProtKB-SubCell"/>
</dbReference>
<dbReference type="GO" id="GO:0060171">
    <property type="term" value="C:stereocilium membrane"/>
    <property type="evidence" value="ECO:0007669"/>
    <property type="project" value="UniProtKB-SubCell"/>
</dbReference>
<dbReference type="GO" id="GO:0051015">
    <property type="term" value="F:actin filament binding"/>
    <property type="evidence" value="ECO:0000318"/>
    <property type="project" value="GO_Central"/>
</dbReference>
<dbReference type="GO" id="GO:0005524">
    <property type="term" value="F:ATP binding"/>
    <property type="evidence" value="ECO:0007669"/>
    <property type="project" value="UniProtKB-KW"/>
</dbReference>
<dbReference type="GO" id="GO:0000146">
    <property type="term" value="F:microfilament motor activity"/>
    <property type="evidence" value="ECO:0000318"/>
    <property type="project" value="GO_Central"/>
</dbReference>
<dbReference type="GO" id="GO:0007015">
    <property type="term" value="P:actin filament organization"/>
    <property type="evidence" value="ECO:0000318"/>
    <property type="project" value="GO_Central"/>
</dbReference>
<dbReference type="GO" id="GO:0030048">
    <property type="term" value="P:actin filament-based movement"/>
    <property type="evidence" value="ECO:0000318"/>
    <property type="project" value="GO_Central"/>
</dbReference>
<dbReference type="GO" id="GO:0006897">
    <property type="term" value="P:endocytosis"/>
    <property type="evidence" value="ECO:0000318"/>
    <property type="project" value="GO_Central"/>
</dbReference>
<dbReference type="GO" id="GO:0032835">
    <property type="term" value="P:glomerulus development"/>
    <property type="evidence" value="ECO:0000315"/>
    <property type="project" value="ZFIN"/>
</dbReference>
<dbReference type="CDD" id="cd23767">
    <property type="entry name" value="IQCD"/>
    <property type="match status" value="1"/>
</dbReference>
<dbReference type="CDD" id="cd01378">
    <property type="entry name" value="MYSc_Myo1"/>
    <property type="match status" value="1"/>
</dbReference>
<dbReference type="FunFam" id="1.10.10.820:FF:000001">
    <property type="entry name" value="Myosin heavy chain"/>
    <property type="match status" value="1"/>
</dbReference>
<dbReference type="FunFam" id="3.40.850.10:FF:000101">
    <property type="entry name" value="Slow myosin heavy chain 2"/>
    <property type="match status" value="1"/>
</dbReference>
<dbReference type="FunFam" id="1.20.58.530:FF:000004">
    <property type="entry name" value="Unconventional myosin ID"/>
    <property type="match status" value="1"/>
</dbReference>
<dbReference type="FunFam" id="1.20.120.720:FF:000013">
    <property type="entry name" value="unconventional myosin-Ic isoform X2"/>
    <property type="match status" value="1"/>
</dbReference>
<dbReference type="Gene3D" id="1.10.10.820">
    <property type="match status" value="1"/>
</dbReference>
<dbReference type="Gene3D" id="1.20.5.190">
    <property type="match status" value="1"/>
</dbReference>
<dbReference type="Gene3D" id="1.20.58.530">
    <property type="match status" value="1"/>
</dbReference>
<dbReference type="Gene3D" id="6.20.240.20">
    <property type="match status" value="1"/>
</dbReference>
<dbReference type="Gene3D" id="3.40.850.10">
    <property type="entry name" value="Kinesin motor domain"/>
    <property type="match status" value="1"/>
</dbReference>
<dbReference type="Gene3D" id="1.20.120.720">
    <property type="entry name" value="Myosin VI head, motor domain, U50 subdomain"/>
    <property type="match status" value="1"/>
</dbReference>
<dbReference type="InterPro" id="IPR000048">
    <property type="entry name" value="IQ_motif_EF-hand-BS"/>
</dbReference>
<dbReference type="InterPro" id="IPR036961">
    <property type="entry name" value="Kinesin_motor_dom_sf"/>
</dbReference>
<dbReference type="InterPro" id="IPR001609">
    <property type="entry name" value="Myosin_head_motor_dom-like"/>
</dbReference>
<dbReference type="InterPro" id="IPR010926">
    <property type="entry name" value="Myosin_TH1"/>
</dbReference>
<dbReference type="InterPro" id="IPR036072">
    <property type="entry name" value="MYSc_Myo1"/>
</dbReference>
<dbReference type="InterPro" id="IPR027417">
    <property type="entry name" value="P-loop_NTPase"/>
</dbReference>
<dbReference type="PANTHER" id="PTHR13140">
    <property type="entry name" value="MYOSIN"/>
    <property type="match status" value="1"/>
</dbReference>
<dbReference type="PANTHER" id="PTHR13140:SF862">
    <property type="entry name" value="UNCONVENTIONAL MYOSIN-IC"/>
    <property type="match status" value="1"/>
</dbReference>
<dbReference type="Pfam" id="PF00612">
    <property type="entry name" value="IQ"/>
    <property type="match status" value="2"/>
</dbReference>
<dbReference type="Pfam" id="PF00063">
    <property type="entry name" value="Myosin_head"/>
    <property type="match status" value="1"/>
</dbReference>
<dbReference type="Pfam" id="PF06017">
    <property type="entry name" value="Myosin_TH1"/>
    <property type="match status" value="1"/>
</dbReference>
<dbReference type="PRINTS" id="PR00193">
    <property type="entry name" value="MYOSINHEAVY"/>
</dbReference>
<dbReference type="SMART" id="SM00015">
    <property type="entry name" value="IQ"/>
    <property type="match status" value="2"/>
</dbReference>
<dbReference type="SMART" id="SM00242">
    <property type="entry name" value="MYSc"/>
    <property type="match status" value="1"/>
</dbReference>
<dbReference type="SUPFAM" id="SSF52540">
    <property type="entry name" value="P-loop containing nucleoside triphosphate hydrolases"/>
    <property type="match status" value="1"/>
</dbReference>
<dbReference type="PROSITE" id="PS50096">
    <property type="entry name" value="IQ"/>
    <property type="match status" value="2"/>
</dbReference>
<dbReference type="PROSITE" id="PS51456">
    <property type="entry name" value="MYOSIN_MOTOR"/>
    <property type="match status" value="1"/>
</dbReference>
<dbReference type="PROSITE" id="PS51757">
    <property type="entry name" value="TH1"/>
    <property type="match status" value="1"/>
</dbReference>